<comment type="function">
    <text evidence="1">Catalyzes the anti-1,4-elimination of the C-3 phosphate and the C-6 proR hydrogen from 5-enolpyruvylshikimate-3-phosphate (EPSP) to yield chorismate, which is the branch point compound that serves as the starting substrate for the three terminal pathways of aromatic amino acid biosynthesis. This reaction introduces a second double bond into the aromatic ring system.</text>
</comment>
<comment type="catalytic activity">
    <reaction evidence="1">
        <text>5-O-(1-carboxyvinyl)-3-phosphoshikimate = chorismate + phosphate</text>
        <dbReference type="Rhea" id="RHEA:21020"/>
        <dbReference type="ChEBI" id="CHEBI:29748"/>
        <dbReference type="ChEBI" id="CHEBI:43474"/>
        <dbReference type="ChEBI" id="CHEBI:57701"/>
        <dbReference type="EC" id="4.2.3.5"/>
    </reaction>
</comment>
<comment type="cofactor">
    <cofactor evidence="1">
        <name>FMNH2</name>
        <dbReference type="ChEBI" id="CHEBI:57618"/>
    </cofactor>
    <text evidence="1">Reduced FMN (FMNH(2)).</text>
</comment>
<comment type="pathway">
    <text evidence="1">Metabolic intermediate biosynthesis; chorismate biosynthesis; chorismate from D-erythrose 4-phosphate and phosphoenolpyruvate: step 7/7.</text>
</comment>
<comment type="subunit">
    <text evidence="1">Homotetramer.</text>
</comment>
<comment type="similarity">
    <text evidence="1">Belongs to the chorismate synthase family.</text>
</comment>
<dbReference type="EC" id="4.2.3.5" evidence="1"/>
<dbReference type="EMBL" id="CP000560">
    <property type="protein sequence ID" value="ABS74449.1"/>
    <property type="molecule type" value="Genomic_DNA"/>
</dbReference>
<dbReference type="RefSeq" id="WP_003153459.1">
    <property type="nucleotide sequence ID" value="NC_009725.2"/>
</dbReference>
<dbReference type="SMR" id="A7Z623"/>
<dbReference type="GeneID" id="93081222"/>
<dbReference type="KEGG" id="bay:RBAM_020870"/>
<dbReference type="HOGENOM" id="CLU_034547_2_0_9"/>
<dbReference type="UniPathway" id="UPA00053">
    <property type="reaction ID" value="UER00090"/>
</dbReference>
<dbReference type="Proteomes" id="UP000001120">
    <property type="component" value="Chromosome"/>
</dbReference>
<dbReference type="GO" id="GO:0005829">
    <property type="term" value="C:cytosol"/>
    <property type="evidence" value="ECO:0007669"/>
    <property type="project" value="TreeGrafter"/>
</dbReference>
<dbReference type="GO" id="GO:0004107">
    <property type="term" value="F:chorismate synthase activity"/>
    <property type="evidence" value="ECO:0007669"/>
    <property type="project" value="UniProtKB-UniRule"/>
</dbReference>
<dbReference type="GO" id="GO:0010181">
    <property type="term" value="F:FMN binding"/>
    <property type="evidence" value="ECO:0007669"/>
    <property type="project" value="TreeGrafter"/>
</dbReference>
<dbReference type="GO" id="GO:0008652">
    <property type="term" value="P:amino acid biosynthetic process"/>
    <property type="evidence" value="ECO:0007669"/>
    <property type="project" value="UniProtKB-KW"/>
</dbReference>
<dbReference type="GO" id="GO:0009073">
    <property type="term" value="P:aromatic amino acid family biosynthetic process"/>
    <property type="evidence" value="ECO:0007669"/>
    <property type="project" value="UniProtKB-KW"/>
</dbReference>
<dbReference type="GO" id="GO:0009423">
    <property type="term" value="P:chorismate biosynthetic process"/>
    <property type="evidence" value="ECO:0007669"/>
    <property type="project" value="UniProtKB-UniRule"/>
</dbReference>
<dbReference type="CDD" id="cd07304">
    <property type="entry name" value="Chorismate_synthase"/>
    <property type="match status" value="1"/>
</dbReference>
<dbReference type="FunFam" id="3.60.150.10:FF:000002">
    <property type="entry name" value="Chorismate synthase"/>
    <property type="match status" value="1"/>
</dbReference>
<dbReference type="Gene3D" id="3.60.150.10">
    <property type="entry name" value="Chorismate synthase AroC"/>
    <property type="match status" value="1"/>
</dbReference>
<dbReference type="HAMAP" id="MF_00300">
    <property type="entry name" value="Chorismate_synth"/>
    <property type="match status" value="1"/>
</dbReference>
<dbReference type="InterPro" id="IPR000453">
    <property type="entry name" value="Chorismate_synth"/>
</dbReference>
<dbReference type="InterPro" id="IPR035904">
    <property type="entry name" value="Chorismate_synth_AroC_sf"/>
</dbReference>
<dbReference type="InterPro" id="IPR020541">
    <property type="entry name" value="Chorismate_synthase_CS"/>
</dbReference>
<dbReference type="NCBIfam" id="TIGR00033">
    <property type="entry name" value="aroC"/>
    <property type="match status" value="1"/>
</dbReference>
<dbReference type="NCBIfam" id="NF003793">
    <property type="entry name" value="PRK05382.1"/>
    <property type="match status" value="1"/>
</dbReference>
<dbReference type="PANTHER" id="PTHR21085">
    <property type="entry name" value="CHORISMATE SYNTHASE"/>
    <property type="match status" value="1"/>
</dbReference>
<dbReference type="PANTHER" id="PTHR21085:SF0">
    <property type="entry name" value="CHORISMATE SYNTHASE"/>
    <property type="match status" value="1"/>
</dbReference>
<dbReference type="Pfam" id="PF01264">
    <property type="entry name" value="Chorismate_synt"/>
    <property type="match status" value="1"/>
</dbReference>
<dbReference type="PIRSF" id="PIRSF001456">
    <property type="entry name" value="Chorismate_synth"/>
    <property type="match status" value="1"/>
</dbReference>
<dbReference type="SUPFAM" id="SSF103263">
    <property type="entry name" value="Chorismate synthase, AroC"/>
    <property type="match status" value="1"/>
</dbReference>
<dbReference type="PROSITE" id="PS00787">
    <property type="entry name" value="CHORISMATE_SYNTHASE_1"/>
    <property type="match status" value="1"/>
</dbReference>
<dbReference type="PROSITE" id="PS00788">
    <property type="entry name" value="CHORISMATE_SYNTHASE_2"/>
    <property type="match status" value="1"/>
</dbReference>
<dbReference type="PROSITE" id="PS00789">
    <property type="entry name" value="CHORISMATE_SYNTHASE_3"/>
    <property type="match status" value="1"/>
</dbReference>
<evidence type="ECO:0000255" key="1">
    <source>
        <dbReference type="HAMAP-Rule" id="MF_00300"/>
    </source>
</evidence>
<sequence length="390" mass="42667">MRYLTAGESHGPQLTTIIEGVPAGLYITEEDINFELARRQKGHGRGRRMQIETDRAKITSGVRHARTLGSPIALVVENKDWTHWTKIMGAAPITEEEESEMKRQISRPRPGHADLNGAIKYNHRDMRNVLERSSARETTVRVAAGAVAKKILAELGIKVAGHVLQIGSVKAEKTDYTSIEDLKRVTEESPVRCYDEEAGRQMMAAIDEAKANGDSIGGIVEVIVEGMPVGVGSYVHYDRKLDSKLAAAVLSINAFKGVEFGIGFEAAGKNGSEVHDEIVWDEEKGYTRATNRLGGLEGGMTTGMPIVVRGVMKPIPTLYKPLKSVDIETKEPFTASIERSDSCAVPAASVVAEAAVAWEIANAVVEQFGLDQIDRIKENVENMKKLSREF</sequence>
<proteinExistence type="inferred from homology"/>
<name>AROC_BACVZ</name>
<feature type="chain" id="PRO_1000022459" description="Chorismate synthase">
    <location>
        <begin position="1"/>
        <end position="390"/>
    </location>
</feature>
<feature type="binding site" evidence="1">
    <location>
        <position position="39"/>
    </location>
    <ligand>
        <name>NADP(+)</name>
        <dbReference type="ChEBI" id="CHEBI:58349"/>
    </ligand>
</feature>
<feature type="binding site" evidence="1">
    <location>
        <position position="45"/>
    </location>
    <ligand>
        <name>NADP(+)</name>
        <dbReference type="ChEBI" id="CHEBI:58349"/>
    </ligand>
</feature>
<feature type="binding site" evidence="1">
    <location>
        <begin position="132"/>
        <end position="134"/>
    </location>
    <ligand>
        <name>FMN</name>
        <dbReference type="ChEBI" id="CHEBI:58210"/>
    </ligand>
</feature>
<feature type="binding site" evidence="1">
    <location>
        <begin position="253"/>
        <end position="254"/>
    </location>
    <ligand>
        <name>FMN</name>
        <dbReference type="ChEBI" id="CHEBI:58210"/>
    </ligand>
</feature>
<feature type="binding site" evidence="1">
    <location>
        <position position="298"/>
    </location>
    <ligand>
        <name>FMN</name>
        <dbReference type="ChEBI" id="CHEBI:58210"/>
    </ligand>
</feature>
<feature type="binding site" evidence="1">
    <location>
        <begin position="313"/>
        <end position="317"/>
    </location>
    <ligand>
        <name>FMN</name>
        <dbReference type="ChEBI" id="CHEBI:58210"/>
    </ligand>
</feature>
<feature type="binding site" evidence="1">
    <location>
        <position position="339"/>
    </location>
    <ligand>
        <name>FMN</name>
        <dbReference type="ChEBI" id="CHEBI:58210"/>
    </ligand>
</feature>
<accession>A7Z623</accession>
<gene>
    <name evidence="1" type="primary">aroC</name>
    <name type="ordered locus">RBAM_020870</name>
</gene>
<reference key="1">
    <citation type="journal article" date="2007" name="Nat. Biotechnol.">
        <title>Comparative analysis of the complete genome sequence of the plant growth-promoting bacterium Bacillus amyloliquefaciens FZB42.</title>
        <authorList>
            <person name="Chen X.H."/>
            <person name="Koumoutsi A."/>
            <person name="Scholz R."/>
            <person name="Eisenreich A."/>
            <person name="Schneider K."/>
            <person name="Heinemeyer I."/>
            <person name="Morgenstern B."/>
            <person name="Voss B."/>
            <person name="Hess W.R."/>
            <person name="Reva O."/>
            <person name="Junge H."/>
            <person name="Voigt B."/>
            <person name="Jungblut P.R."/>
            <person name="Vater J."/>
            <person name="Suessmuth R."/>
            <person name="Liesegang H."/>
            <person name="Strittmatter A."/>
            <person name="Gottschalk G."/>
            <person name="Borriss R."/>
        </authorList>
    </citation>
    <scope>NUCLEOTIDE SEQUENCE [LARGE SCALE GENOMIC DNA]</scope>
    <source>
        <strain>DSM 23117 / BGSC 10A6 / LMG 26770 / FZB42</strain>
    </source>
</reference>
<protein>
    <recommendedName>
        <fullName evidence="1">Chorismate synthase</fullName>
        <shortName evidence="1">CS</shortName>
        <ecNumber evidence="1">4.2.3.5</ecNumber>
    </recommendedName>
    <alternativeName>
        <fullName evidence="1">5-enolpyruvylshikimate-3-phosphate phospholyase</fullName>
    </alternativeName>
</protein>
<organism>
    <name type="scientific">Bacillus velezensis (strain DSM 23117 / BGSC 10A6 / LMG 26770 / FZB42)</name>
    <name type="common">Bacillus amyloliquefaciens subsp. plantarum</name>
    <dbReference type="NCBI Taxonomy" id="326423"/>
    <lineage>
        <taxon>Bacteria</taxon>
        <taxon>Bacillati</taxon>
        <taxon>Bacillota</taxon>
        <taxon>Bacilli</taxon>
        <taxon>Bacillales</taxon>
        <taxon>Bacillaceae</taxon>
        <taxon>Bacillus</taxon>
        <taxon>Bacillus amyloliquefaciens group</taxon>
    </lineage>
</organism>
<keyword id="KW-0028">Amino-acid biosynthesis</keyword>
<keyword id="KW-0057">Aromatic amino acid biosynthesis</keyword>
<keyword id="KW-0274">FAD</keyword>
<keyword id="KW-0285">Flavoprotein</keyword>
<keyword id="KW-0288">FMN</keyword>
<keyword id="KW-0456">Lyase</keyword>
<keyword id="KW-0521">NADP</keyword>